<sequence>MQHDGYWVFSQVDPVAFSLGPLSVRWYGLMYLFGFAFAMWLAGRRADTPNSGWTRNEVSDLLFYGFLGVILGGRVGYVLFYNFDMFLADPIYLFKIWTGGMSFHGGLIGVITAMIWFAHKTKRHFFTVADFVAPLIPFGLGVGRIGNFLNGELWGRVTDVPWAIIFPEAGPEPRHPSQLYQFALEGVVLFIILNLFWRKNPPRGAISGLFLFCYGLFRFLVEFVRQPDSQLGLYFQEISMGQILSMPMIVAGALMVWAAYKRPQLFGNAGKEVKQ</sequence>
<name>LGT_AERS4</name>
<organism>
    <name type="scientific">Aeromonas salmonicida (strain A449)</name>
    <dbReference type="NCBI Taxonomy" id="382245"/>
    <lineage>
        <taxon>Bacteria</taxon>
        <taxon>Pseudomonadati</taxon>
        <taxon>Pseudomonadota</taxon>
        <taxon>Gammaproteobacteria</taxon>
        <taxon>Aeromonadales</taxon>
        <taxon>Aeromonadaceae</taxon>
        <taxon>Aeromonas</taxon>
    </lineage>
</organism>
<proteinExistence type="inferred from homology"/>
<keyword id="KW-0997">Cell inner membrane</keyword>
<keyword id="KW-1003">Cell membrane</keyword>
<keyword id="KW-0472">Membrane</keyword>
<keyword id="KW-0808">Transferase</keyword>
<keyword id="KW-0812">Transmembrane</keyword>
<keyword id="KW-1133">Transmembrane helix</keyword>
<evidence type="ECO:0000255" key="1">
    <source>
        <dbReference type="HAMAP-Rule" id="MF_01147"/>
    </source>
</evidence>
<dbReference type="EC" id="2.5.1.145" evidence="1"/>
<dbReference type="EMBL" id="CP000644">
    <property type="protein sequence ID" value="ABO88838.1"/>
    <property type="molecule type" value="Genomic_DNA"/>
</dbReference>
<dbReference type="RefSeq" id="WP_011898348.1">
    <property type="nucleotide sequence ID" value="NC_009348.1"/>
</dbReference>
<dbReference type="SMR" id="A4SIW6"/>
<dbReference type="STRING" id="29491.GCA_000820065_01819"/>
<dbReference type="KEGG" id="asa:ASA_0675"/>
<dbReference type="PATRIC" id="fig|382245.13.peg.683"/>
<dbReference type="eggNOG" id="COG0682">
    <property type="taxonomic scope" value="Bacteria"/>
</dbReference>
<dbReference type="HOGENOM" id="CLU_013386_1_0_6"/>
<dbReference type="UniPathway" id="UPA00664"/>
<dbReference type="Proteomes" id="UP000000225">
    <property type="component" value="Chromosome"/>
</dbReference>
<dbReference type="GO" id="GO:0005886">
    <property type="term" value="C:plasma membrane"/>
    <property type="evidence" value="ECO:0007669"/>
    <property type="project" value="UniProtKB-SubCell"/>
</dbReference>
<dbReference type="GO" id="GO:0008961">
    <property type="term" value="F:phosphatidylglycerol-prolipoprotein diacylglyceryl transferase activity"/>
    <property type="evidence" value="ECO:0007669"/>
    <property type="project" value="UniProtKB-UniRule"/>
</dbReference>
<dbReference type="GO" id="GO:0042158">
    <property type="term" value="P:lipoprotein biosynthetic process"/>
    <property type="evidence" value="ECO:0007669"/>
    <property type="project" value="UniProtKB-UniRule"/>
</dbReference>
<dbReference type="HAMAP" id="MF_01147">
    <property type="entry name" value="Lgt"/>
    <property type="match status" value="1"/>
</dbReference>
<dbReference type="InterPro" id="IPR001640">
    <property type="entry name" value="Lgt"/>
</dbReference>
<dbReference type="NCBIfam" id="TIGR00544">
    <property type="entry name" value="lgt"/>
    <property type="match status" value="1"/>
</dbReference>
<dbReference type="PANTHER" id="PTHR30589:SF0">
    <property type="entry name" value="PHOSPHATIDYLGLYCEROL--PROLIPOPROTEIN DIACYLGLYCERYL TRANSFERASE"/>
    <property type="match status" value="1"/>
</dbReference>
<dbReference type="PANTHER" id="PTHR30589">
    <property type="entry name" value="PROLIPOPROTEIN DIACYLGLYCERYL TRANSFERASE"/>
    <property type="match status" value="1"/>
</dbReference>
<dbReference type="Pfam" id="PF01790">
    <property type="entry name" value="LGT"/>
    <property type="match status" value="1"/>
</dbReference>
<dbReference type="PROSITE" id="PS01311">
    <property type="entry name" value="LGT"/>
    <property type="match status" value="1"/>
</dbReference>
<accession>A4SIW6</accession>
<reference key="1">
    <citation type="journal article" date="2008" name="BMC Genomics">
        <title>The genome of Aeromonas salmonicida subsp. salmonicida A449: insights into the evolution of a fish pathogen.</title>
        <authorList>
            <person name="Reith M.E."/>
            <person name="Singh R.K."/>
            <person name="Curtis B."/>
            <person name="Boyd J.M."/>
            <person name="Bouevitch A."/>
            <person name="Kimball J."/>
            <person name="Munholland J."/>
            <person name="Murphy C."/>
            <person name="Sarty D."/>
            <person name="Williams J."/>
            <person name="Nash J.H."/>
            <person name="Johnson S.C."/>
            <person name="Brown L.L."/>
        </authorList>
    </citation>
    <scope>NUCLEOTIDE SEQUENCE [LARGE SCALE GENOMIC DNA]</scope>
    <source>
        <strain>A449</strain>
    </source>
</reference>
<comment type="function">
    <text evidence="1">Catalyzes the transfer of the diacylglyceryl group from phosphatidylglycerol to the sulfhydryl group of the N-terminal cysteine of a prolipoprotein, the first step in the formation of mature lipoproteins.</text>
</comment>
<comment type="catalytic activity">
    <reaction evidence="1">
        <text>L-cysteinyl-[prolipoprotein] + a 1,2-diacyl-sn-glycero-3-phospho-(1'-sn-glycerol) = an S-1,2-diacyl-sn-glyceryl-L-cysteinyl-[prolipoprotein] + sn-glycerol 1-phosphate + H(+)</text>
        <dbReference type="Rhea" id="RHEA:56712"/>
        <dbReference type="Rhea" id="RHEA-COMP:14679"/>
        <dbReference type="Rhea" id="RHEA-COMP:14680"/>
        <dbReference type="ChEBI" id="CHEBI:15378"/>
        <dbReference type="ChEBI" id="CHEBI:29950"/>
        <dbReference type="ChEBI" id="CHEBI:57685"/>
        <dbReference type="ChEBI" id="CHEBI:64716"/>
        <dbReference type="ChEBI" id="CHEBI:140658"/>
        <dbReference type="EC" id="2.5.1.145"/>
    </reaction>
</comment>
<comment type="pathway">
    <text evidence="1">Protein modification; lipoprotein biosynthesis (diacylglyceryl transfer).</text>
</comment>
<comment type="subcellular location">
    <subcellularLocation>
        <location evidence="1">Cell inner membrane</location>
        <topology evidence="1">Multi-pass membrane protein</topology>
    </subcellularLocation>
</comment>
<comment type="similarity">
    <text evidence="1">Belongs to the Lgt family.</text>
</comment>
<feature type="chain" id="PRO_1000053385" description="Phosphatidylglycerol--prolipoprotein diacylglyceryl transferase">
    <location>
        <begin position="1"/>
        <end position="275"/>
    </location>
</feature>
<feature type="transmembrane region" description="Helical" evidence="1">
    <location>
        <begin position="22"/>
        <end position="42"/>
    </location>
</feature>
<feature type="transmembrane region" description="Helical" evidence="1">
    <location>
        <begin position="61"/>
        <end position="81"/>
    </location>
</feature>
<feature type="transmembrane region" description="Helical" evidence="1">
    <location>
        <begin position="96"/>
        <end position="116"/>
    </location>
</feature>
<feature type="transmembrane region" description="Helical" evidence="1">
    <location>
        <begin position="125"/>
        <end position="145"/>
    </location>
</feature>
<feature type="transmembrane region" description="Helical" evidence="1">
    <location>
        <begin position="177"/>
        <end position="197"/>
    </location>
</feature>
<feature type="transmembrane region" description="Helical" evidence="1">
    <location>
        <begin position="204"/>
        <end position="224"/>
    </location>
</feature>
<feature type="transmembrane region" description="Helical" evidence="1">
    <location>
        <begin position="238"/>
        <end position="258"/>
    </location>
</feature>
<feature type="binding site" evidence="1">
    <location>
        <position position="144"/>
    </location>
    <ligand>
        <name>a 1,2-diacyl-sn-glycero-3-phospho-(1'-sn-glycerol)</name>
        <dbReference type="ChEBI" id="CHEBI:64716"/>
    </ligand>
</feature>
<protein>
    <recommendedName>
        <fullName evidence="1">Phosphatidylglycerol--prolipoprotein diacylglyceryl transferase</fullName>
        <ecNumber evidence="1">2.5.1.145</ecNumber>
    </recommendedName>
</protein>
<gene>
    <name evidence="1" type="primary">lgt</name>
    <name type="ordered locus">ASA_0675</name>
</gene>